<reference key="1">
    <citation type="journal article" date="2013" name="Nature">
        <title>The zebrafish reference genome sequence and its relationship to the human genome.</title>
        <authorList>
            <person name="Howe K."/>
            <person name="Clark M.D."/>
            <person name="Torroja C.F."/>
            <person name="Torrance J."/>
            <person name="Berthelot C."/>
            <person name="Muffato M."/>
            <person name="Collins J.E."/>
            <person name="Humphray S."/>
            <person name="McLaren K."/>
            <person name="Matthews L."/>
            <person name="McLaren S."/>
            <person name="Sealy I."/>
            <person name="Caccamo M."/>
            <person name="Churcher C."/>
            <person name="Scott C."/>
            <person name="Barrett J.C."/>
            <person name="Koch R."/>
            <person name="Rauch G.J."/>
            <person name="White S."/>
            <person name="Chow W."/>
            <person name="Kilian B."/>
            <person name="Quintais L.T."/>
            <person name="Guerra-Assuncao J.A."/>
            <person name="Zhou Y."/>
            <person name="Gu Y."/>
            <person name="Yen J."/>
            <person name="Vogel J.H."/>
            <person name="Eyre T."/>
            <person name="Redmond S."/>
            <person name="Banerjee R."/>
            <person name="Chi J."/>
            <person name="Fu B."/>
            <person name="Langley E."/>
            <person name="Maguire S.F."/>
            <person name="Laird G.K."/>
            <person name="Lloyd D."/>
            <person name="Kenyon E."/>
            <person name="Donaldson S."/>
            <person name="Sehra H."/>
            <person name="Almeida-King J."/>
            <person name="Loveland J."/>
            <person name="Trevanion S."/>
            <person name="Jones M."/>
            <person name="Quail M."/>
            <person name="Willey D."/>
            <person name="Hunt A."/>
            <person name="Burton J."/>
            <person name="Sims S."/>
            <person name="McLay K."/>
            <person name="Plumb B."/>
            <person name="Davis J."/>
            <person name="Clee C."/>
            <person name="Oliver K."/>
            <person name="Clark R."/>
            <person name="Riddle C."/>
            <person name="Elliot D."/>
            <person name="Threadgold G."/>
            <person name="Harden G."/>
            <person name="Ware D."/>
            <person name="Begum S."/>
            <person name="Mortimore B."/>
            <person name="Kerry G."/>
            <person name="Heath P."/>
            <person name="Phillimore B."/>
            <person name="Tracey A."/>
            <person name="Corby N."/>
            <person name="Dunn M."/>
            <person name="Johnson C."/>
            <person name="Wood J."/>
            <person name="Clark S."/>
            <person name="Pelan S."/>
            <person name="Griffiths G."/>
            <person name="Smith M."/>
            <person name="Glithero R."/>
            <person name="Howden P."/>
            <person name="Barker N."/>
            <person name="Lloyd C."/>
            <person name="Stevens C."/>
            <person name="Harley J."/>
            <person name="Holt K."/>
            <person name="Panagiotidis G."/>
            <person name="Lovell J."/>
            <person name="Beasley H."/>
            <person name="Henderson C."/>
            <person name="Gordon D."/>
            <person name="Auger K."/>
            <person name="Wright D."/>
            <person name="Collins J."/>
            <person name="Raisen C."/>
            <person name="Dyer L."/>
            <person name="Leung K."/>
            <person name="Robertson L."/>
            <person name="Ambridge K."/>
            <person name="Leongamornlert D."/>
            <person name="McGuire S."/>
            <person name="Gilderthorp R."/>
            <person name="Griffiths C."/>
            <person name="Manthravadi D."/>
            <person name="Nichol S."/>
            <person name="Barker G."/>
            <person name="Whitehead S."/>
            <person name="Kay M."/>
            <person name="Brown J."/>
            <person name="Murnane C."/>
            <person name="Gray E."/>
            <person name="Humphries M."/>
            <person name="Sycamore N."/>
            <person name="Barker D."/>
            <person name="Saunders D."/>
            <person name="Wallis J."/>
            <person name="Babbage A."/>
            <person name="Hammond S."/>
            <person name="Mashreghi-Mohammadi M."/>
            <person name="Barr L."/>
            <person name="Martin S."/>
            <person name="Wray P."/>
            <person name="Ellington A."/>
            <person name="Matthews N."/>
            <person name="Ellwood M."/>
            <person name="Woodmansey R."/>
            <person name="Clark G."/>
            <person name="Cooper J."/>
            <person name="Tromans A."/>
            <person name="Grafham D."/>
            <person name="Skuce C."/>
            <person name="Pandian R."/>
            <person name="Andrews R."/>
            <person name="Harrison E."/>
            <person name="Kimberley A."/>
            <person name="Garnett J."/>
            <person name="Fosker N."/>
            <person name="Hall R."/>
            <person name="Garner P."/>
            <person name="Kelly D."/>
            <person name="Bird C."/>
            <person name="Palmer S."/>
            <person name="Gehring I."/>
            <person name="Berger A."/>
            <person name="Dooley C.M."/>
            <person name="Ersan-Urun Z."/>
            <person name="Eser C."/>
            <person name="Geiger H."/>
            <person name="Geisler M."/>
            <person name="Karotki L."/>
            <person name="Kirn A."/>
            <person name="Konantz J."/>
            <person name="Konantz M."/>
            <person name="Oberlander M."/>
            <person name="Rudolph-Geiger S."/>
            <person name="Teucke M."/>
            <person name="Lanz C."/>
            <person name="Raddatz G."/>
            <person name="Osoegawa K."/>
            <person name="Zhu B."/>
            <person name="Rapp A."/>
            <person name="Widaa S."/>
            <person name="Langford C."/>
            <person name="Yang F."/>
            <person name="Schuster S.C."/>
            <person name="Carter N.P."/>
            <person name="Harrow J."/>
            <person name="Ning Z."/>
            <person name="Herrero J."/>
            <person name="Searle S.M."/>
            <person name="Enright A."/>
            <person name="Geisler R."/>
            <person name="Plasterk R.H."/>
            <person name="Lee C."/>
            <person name="Westerfield M."/>
            <person name="de Jong P.J."/>
            <person name="Zon L.I."/>
            <person name="Postlethwait J.H."/>
            <person name="Nusslein-Volhard C."/>
            <person name="Hubbard T.J."/>
            <person name="Roest Crollius H."/>
            <person name="Rogers J."/>
            <person name="Stemple D.L."/>
        </authorList>
    </citation>
    <scope>NUCLEOTIDE SEQUENCE [LARGE SCALE GENOMIC DNA]</scope>
    <source>
        <strain>Tuebingen</strain>
    </source>
</reference>
<reference evidence="6" key="2">
    <citation type="submission" date="2003-11" db="EMBL/GenBank/DDBJ databases">
        <authorList>
            <consortium name="NIH - Zebrafish Gene Collection (ZGC) project"/>
        </authorList>
    </citation>
    <scope>NUCLEOTIDE SEQUENCE [LARGE SCALE MRNA]</scope>
    <source>
        <tissue evidence="5">Retina</tissue>
    </source>
</reference>
<protein>
    <recommendedName>
        <fullName evidence="7">Mid1-interacting protein 1-B</fullName>
    </recommendedName>
</protein>
<feature type="chain" id="PRO_0000389525" description="Mid1-interacting protein 1-B">
    <location>
        <begin position="1"/>
        <end position="147"/>
    </location>
</feature>
<comment type="function">
    <text evidence="1">Involved in stabilization of microtubules. May play a role in the regulation of lipogenesis (By similarity).</text>
</comment>
<comment type="subcellular location">
    <subcellularLocation>
        <location evidence="2">Nucleus</location>
    </subcellularLocation>
    <subcellularLocation>
        <location evidence="2">Cytoplasm</location>
    </subcellularLocation>
    <subcellularLocation>
        <location evidence="1">Cytoplasm</location>
        <location evidence="1">Cytoskeleton</location>
    </subcellularLocation>
    <text evidence="2">Associated with microtubules.</text>
</comment>
<comment type="similarity">
    <text evidence="3">Belongs to the SPOT14 family.</text>
</comment>
<comment type="caution">
    <text evidence="4">It is uncertain whether Met-1 or Met-2 is the initiator.</text>
</comment>
<comment type="sequence caution" evidence="4">
    <conflict type="erroneous initiation">
        <sequence resource="EMBL-CDS" id="AAH60921"/>
    </conflict>
</comment>
<sequence length="147" mass="16811">MMQICDSYNQKNSLFNAMNRFIGAVNNMDQTVMVPSLLRDVPLDQEEEKEVTSFQDGDMYGSYVLLKSIRNDIEWGVLQAEERRKEKHGVTTTSLEVSRIEPNDKDLEKLFHYHLSGLHTVLAKLTRKANTLTNRYKQEIGIGGCGN</sequence>
<gene>
    <name evidence="7" type="primary">mid1ip1b</name>
    <name type="ORF">si:dkey-277i15.1</name>
    <name type="ORF">zgc:73223</name>
</gene>
<dbReference type="EMBL" id="BX927146">
    <property type="protein sequence ID" value="CAK10925.1"/>
    <property type="molecule type" value="Genomic_DNA"/>
</dbReference>
<dbReference type="EMBL" id="BC060921">
    <property type="protein sequence ID" value="AAH60921.1"/>
    <property type="status" value="ALT_INIT"/>
    <property type="molecule type" value="mRNA"/>
</dbReference>
<dbReference type="RefSeq" id="NP_957126.2">
    <property type="nucleotide sequence ID" value="NM_200832.2"/>
</dbReference>
<dbReference type="SMR" id="Q1LUV9"/>
<dbReference type="FunCoup" id="Q1LUV9">
    <property type="interactions" value="1098"/>
</dbReference>
<dbReference type="STRING" id="7955.ENSDARP00000021980"/>
<dbReference type="PaxDb" id="7955-ENSDARP00000021980"/>
<dbReference type="Ensembl" id="ENSDART00000007649">
    <property type="protein sequence ID" value="ENSDARP00000021980"/>
    <property type="gene ID" value="ENSDARG00000019302"/>
</dbReference>
<dbReference type="GeneID" id="393805"/>
<dbReference type="KEGG" id="dre:393805"/>
<dbReference type="AGR" id="ZFIN:ZDB-GENE-040426-1720"/>
<dbReference type="CTD" id="393805"/>
<dbReference type="ZFIN" id="ZDB-GENE-040426-1720">
    <property type="gene designation" value="mid1ip1b"/>
</dbReference>
<dbReference type="eggNOG" id="ENOG502S0KR">
    <property type="taxonomic scope" value="Eukaryota"/>
</dbReference>
<dbReference type="HOGENOM" id="CLU_066079_1_0_1"/>
<dbReference type="InParanoid" id="Q1LUV9"/>
<dbReference type="OMA" id="HDSAYFQ"/>
<dbReference type="OrthoDB" id="5951908at2759"/>
<dbReference type="PhylomeDB" id="Q1LUV9"/>
<dbReference type="TreeFam" id="TF326826"/>
<dbReference type="Reactome" id="R-DRE-200425">
    <property type="pathway name" value="Carnitine shuttle"/>
</dbReference>
<dbReference type="PRO" id="PR:Q1LUV9"/>
<dbReference type="Proteomes" id="UP000000437">
    <property type="component" value="Chromosome 22"/>
</dbReference>
<dbReference type="Bgee" id="ENSDARG00000019302">
    <property type="expression patterns" value="Expressed in muscle tissue and 52 other cell types or tissues"/>
</dbReference>
<dbReference type="GO" id="GO:0005829">
    <property type="term" value="C:cytosol"/>
    <property type="evidence" value="ECO:0000318"/>
    <property type="project" value="GO_Central"/>
</dbReference>
<dbReference type="GO" id="GO:0005874">
    <property type="term" value="C:microtubule"/>
    <property type="evidence" value="ECO:0007669"/>
    <property type="project" value="UniProtKB-KW"/>
</dbReference>
<dbReference type="GO" id="GO:0005634">
    <property type="term" value="C:nucleus"/>
    <property type="evidence" value="ECO:0007669"/>
    <property type="project" value="UniProtKB-SubCell"/>
</dbReference>
<dbReference type="GO" id="GO:0140496">
    <property type="term" value="F:gamma-tubulin complex binding"/>
    <property type="evidence" value="ECO:0000314"/>
    <property type="project" value="ZFIN"/>
</dbReference>
<dbReference type="GO" id="GO:0072175">
    <property type="term" value="P:epithelial tube formation"/>
    <property type="evidence" value="ECO:0000315"/>
    <property type="project" value="ZFIN"/>
</dbReference>
<dbReference type="GO" id="GO:0061842">
    <property type="term" value="P:microtubule organizing center localization"/>
    <property type="evidence" value="ECO:0000315"/>
    <property type="project" value="ZFIN"/>
</dbReference>
<dbReference type="GO" id="GO:0046890">
    <property type="term" value="P:regulation of lipid biosynthetic process"/>
    <property type="evidence" value="ECO:0000318"/>
    <property type="project" value="GO_Central"/>
</dbReference>
<dbReference type="Gene3D" id="6.10.140.1610">
    <property type="match status" value="1"/>
</dbReference>
<dbReference type="InterPro" id="IPR053719">
    <property type="entry name" value="Lipogen_MT_Stabilize_sf"/>
</dbReference>
<dbReference type="InterPro" id="IPR009786">
    <property type="entry name" value="Spot_14"/>
</dbReference>
<dbReference type="PANTHER" id="PTHR14315:SF19">
    <property type="entry name" value="MID1-INTERACTING PROTEIN 1-B-RELATED"/>
    <property type="match status" value="1"/>
</dbReference>
<dbReference type="PANTHER" id="PTHR14315">
    <property type="entry name" value="SPOT14 FAMILY MEMBER"/>
    <property type="match status" value="1"/>
</dbReference>
<dbReference type="Pfam" id="PF07084">
    <property type="entry name" value="Spot_14"/>
    <property type="match status" value="1"/>
</dbReference>
<name>M1I1B_DANRE</name>
<accession>Q1LUV9</accession>
<accession>Q6P955</accession>
<evidence type="ECO:0000250" key="1"/>
<evidence type="ECO:0000250" key="2">
    <source>
        <dbReference type="UniProtKB" id="Q9CQ20"/>
    </source>
</evidence>
<evidence type="ECO:0000255" key="3"/>
<evidence type="ECO:0000305" key="4"/>
<evidence type="ECO:0000312" key="5">
    <source>
        <dbReference type="EMBL" id="AAH60921.1"/>
    </source>
</evidence>
<evidence type="ECO:0000312" key="6">
    <source>
        <dbReference type="EMBL" id="CAK10925.1"/>
    </source>
</evidence>
<evidence type="ECO:0000312" key="7">
    <source>
        <dbReference type="ZFIN" id="ZDB-GENE-040426-1720"/>
    </source>
</evidence>
<organism>
    <name type="scientific">Danio rerio</name>
    <name type="common">Zebrafish</name>
    <name type="synonym">Brachydanio rerio</name>
    <dbReference type="NCBI Taxonomy" id="7955"/>
    <lineage>
        <taxon>Eukaryota</taxon>
        <taxon>Metazoa</taxon>
        <taxon>Chordata</taxon>
        <taxon>Craniata</taxon>
        <taxon>Vertebrata</taxon>
        <taxon>Euteleostomi</taxon>
        <taxon>Actinopterygii</taxon>
        <taxon>Neopterygii</taxon>
        <taxon>Teleostei</taxon>
        <taxon>Ostariophysi</taxon>
        <taxon>Cypriniformes</taxon>
        <taxon>Danionidae</taxon>
        <taxon>Danioninae</taxon>
        <taxon>Danio</taxon>
    </lineage>
</organism>
<keyword id="KW-0963">Cytoplasm</keyword>
<keyword id="KW-0206">Cytoskeleton</keyword>
<keyword id="KW-0493">Microtubule</keyword>
<keyword id="KW-0539">Nucleus</keyword>
<keyword id="KW-1185">Reference proteome</keyword>
<proteinExistence type="evidence at transcript level"/>